<gene>
    <name evidence="1" type="primary">argS</name>
    <name type="ordered locus">USA300HOU_0613</name>
</gene>
<sequence>MNIIDQVKQTLVEEIAASINKAGLADEIPDIKIEVPKDTKNGDYATNIAMVLTKIAKRNPREIAQAIVDNLDTEKAHVKQIDIAGPGFINFYLDNQYLTAIIPEAIEKGDQFGHVNESKGQNVLLEYVSANPTGDLHIGHARNAAVGDALANILTAAGYNVTREYYINDAGNQITNLARSIETRFFEALGDNSYSMPEDGYNGKDIIEIGKDLAEKHPEIKDYSEEARLKEFRKLGVEYEMAKLKNDLAEFNTHFDNWFSETSLYEKGEILEVLAKMKELGYTYEADGATWLRTTDFKDDKDRVLIKNDGTYTYFLPDIAYHFDKVKRGNDILIDLFGADHHGYINRLKASLETFGVDSNRLEIQIMQMVRLMENGKEVKMSKRTGNAITLREIMDEVGVDAARYFLTMRSPDSHFDFDMELAKEQSQDNPVYYAQYAHARICSILKQAKEQGIEVTAANDFTTITNEKAIELLKKVADFEPTIESAAEHRSAHRITNYIQDLASHFHKFYNAEKVLTDDIEKTKAHVAMIEAVRITLKNALAMVGVSAPESM</sequence>
<proteinExistence type="inferred from homology"/>
<keyword id="KW-0030">Aminoacyl-tRNA synthetase</keyword>
<keyword id="KW-0067">ATP-binding</keyword>
<keyword id="KW-0963">Cytoplasm</keyword>
<keyword id="KW-0436">Ligase</keyword>
<keyword id="KW-0547">Nucleotide-binding</keyword>
<keyword id="KW-0648">Protein biosynthesis</keyword>
<evidence type="ECO:0000255" key="1">
    <source>
        <dbReference type="HAMAP-Rule" id="MF_00123"/>
    </source>
</evidence>
<name>SYR_STAAT</name>
<organism>
    <name type="scientific">Staphylococcus aureus (strain USA300 / TCH1516)</name>
    <dbReference type="NCBI Taxonomy" id="451516"/>
    <lineage>
        <taxon>Bacteria</taxon>
        <taxon>Bacillati</taxon>
        <taxon>Bacillota</taxon>
        <taxon>Bacilli</taxon>
        <taxon>Bacillales</taxon>
        <taxon>Staphylococcaceae</taxon>
        <taxon>Staphylococcus</taxon>
    </lineage>
</organism>
<reference key="1">
    <citation type="journal article" date="2007" name="BMC Microbiol.">
        <title>Subtle genetic changes enhance virulence of methicillin resistant and sensitive Staphylococcus aureus.</title>
        <authorList>
            <person name="Highlander S.K."/>
            <person name="Hulten K.G."/>
            <person name="Qin X."/>
            <person name="Jiang H."/>
            <person name="Yerrapragada S."/>
            <person name="Mason E.O. Jr."/>
            <person name="Shang Y."/>
            <person name="Williams T.M."/>
            <person name="Fortunov R.M."/>
            <person name="Liu Y."/>
            <person name="Igboeli O."/>
            <person name="Petrosino J."/>
            <person name="Tirumalai M."/>
            <person name="Uzman A."/>
            <person name="Fox G.E."/>
            <person name="Cardenas A.M."/>
            <person name="Muzny D.M."/>
            <person name="Hemphill L."/>
            <person name="Ding Y."/>
            <person name="Dugan S."/>
            <person name="Blyth P.R."/>
            <person name="Buhay C.J."/>
            <person name="Dinh H.H."/>
            <person name="Hawes A.C."/>
            <person name="Holder M."/>
            <person name="Kovar C.L."/>
            <person name="Lee S.L."/>
            <person name="Liu W."/>
            <person name="Nazareth L.V."/>
            <person name="Wang Q."/>
            <person name="Zhou J."/>
            <person name="Kaplan S.L."/>
            <person name="Weinstock G.M."/>
        </authorList>
    </citation>
    <scope>NUCLEOTIDE SEQUENCE [LARGE SCALE GENOMIC DNA]</scope>
    <source>
        <strain>USA300 / TCH1516</strain>
    </source>
</reference>
<dbReference type="EC" id="6.1.1.19" evidence="1"/>
<dbReference type="EMBL" id="CP000730">
    <property type="protein sequence ID" value="ABX28638.1"/>
    <property type="molecule type" value="Genomic_DNA"/>
</dbReference>
<dbReference type="RefSeq" id="WP_001021145.1">
    <property type="nucleotide sequence ID" value="NC_010079.1"/>
</dbReference>
<dbReference type="SMR" id="A8Z117"/>
<dbReference type="KEGG" id="sax:USA300HOU_0613"/>
<dbReference type="HOGENOM" id="CLU_006406_0_1_9"/>
<dbReference type="GO" id="GO:0005737">
    <property type="term" value="C:cytoplasm"/>
    <property type="evidence" value="ECO:0007669"/>
    <property type="project" value="UniProtKB-SubCell"/>
</dbReference>
<dbReference type="GO" id="GO:0004814">
    <property type="term" value="F:arginine-tRNA ligase activity"/>
    <property type="evidence" value="ECO:0007669"/>
    <property type="project" value="UniProtKB-UniRule"/>
</dbReference>
<dbReference type="GO" id="GO:0005524">
    <property type="term" value="F:ATP binding"/>
    <property type="evidence" value="ECO:0007669"/>
    <property type="project" value="UniProtKB-UniRule"/>
</dbReference>
<dbReference type="GO" id="GO:0006420">
    <property type="term" value="P:arginyl-tRNA aminoacylation"/>
    <property type="evidence" value="ECO:0007669"/>
    <property type="project" value="UniProtKB-UniRule"/>
</dbReference>
<dbReference type="CDD" id="cd00671">
    <property type="entry name" value="ArgRS_core"/>
    <property type="match status" value="1"/>
</dbReference>
<dbReference type="FunFam" id="1.10.730.10:FF:000008">
    <property type="entry name" value="Arginine--tRNA ligase"/>
    <property type="match status" value="1"/>
</dbReference>
<dbReference type="FunFam" id="3.30.1360.70:FF:000003">
    <property type="entry name" value="Arginine--tRNA ligase"/>
    <property type="match status" value="1"/>
</dbReference>
<dbReference type="FunFam" id="3.40.50.620:FF:000062">
    <property type="entry name" value="Arginine--tRNA ligase"/>
    <property type="match status" value="1"/>
</dbReference>
<dbReference type="Gene3D" id="3.30.1360.70">
    <property type="entry name" value="Arginyl tRNA synthetase N-terminal domain"/>
    <property type="match status" value="1"/>
</dbReference>
<dbReference type="Gene3D" id="3.40.50.620">
    <property type="entry name" value="HUPs"/>
    <property type="match status" value="1"/>
</dbReference>
<dbReference type="Gene3D" id="1.10.730.10">
    <property type="entry name" value="Isoleucyl-tRNA Synthetase, Domain 1"/>
    <property type="match status" value="1"/>
</dbReference>
<dbReference type="HAMAP" id="MF_00123">
    <property type="entry name" value="Arg_tRNA_synth"/>
    <property type="match status" value="1"/>
</dbReference>
<dbReference type="InterPro" id="IPR001412">
    <property type="entry name" value="aa-tRNA-synth_I_CS"/>
</dbReference>
<dbReference type="InterPro" id="IPR001278">
    <property type="entry name" value="Arg-tRNA-ligase"/>
</dbReference>
<dbReference type="InterPro" id="IPR005148">
    <property type="entry name" value="Arg-tRNA-synth_N"/>
</dbReference>
<dbReference type="InterPro" id="IPR036695">
    <property type="entry name" value="Arg-tRNA-synth_N_sf"/>
</dbReference>
<dbReference type="InterPro" id="IPR035684">
    <property type="entry name" value="ArgRS_core"/>
</dbReference>
<dbReference type="InterPro" id="IPR008909">
    <property type="entry name" value="DALR_anticod-bd"/>
</dbReference>
<dbReference type="InterPro" id="IPR014729">
    <property type="entry name" value="Rossmann-like_a/b/a_fold"/>
</dbReference>
<dbReference type="InterPro" id="IPR009080">
    <property type="entry name" value="tRNAsynth_Ia_anticodon-bd"/>
</dbReference>
<dbReference type="NCBIfam" id="TIGR00456">
    <property type="entry name" value="argS"/>
    <property type="match status" value="1"/>
</dbReference>
<dbReference type="PANTHER" id="PTHR11956:SF5">
    <property type="entry name" value="ARGININE--TRNA LIGASE, CYTOPLASMIC"/>
    <property type="match status" value="1"/>
</dbReference>
<dbReference type="PANTHER" id="PTHR11956">
    <property type="entry name" value="ARGINYL-TRNA SYNTHETASE"/>
    <property type="match status" value="1"/>
</dbReference>
<dbReference type="Pfam" id="PF03485">
    <property type="entry name" value="Arg_tRNA_synt_N"/>
    <property type="match status" value="1"/>
</dbReference>
<dbReference type="Pfam" id="PF05746">
    <property type="entry name" value="DALR_1"/>
    <property type="match status" value="1"/>
</dbReference>
<dbReference type="Pfam" id="PF00750">
    <property type="entry name" value="tRNA-synt_1d"/>
    <property type="match status" value="1"/>
</dbReference>
<dbReference type="PRINTS" id="PR01038">
    <property type="entry name" value="TRNASYNTHARG"/>
</dbReference>
<dbReference type="SMART" id="SM01016">
    <property type="entry name" value="Arg_tRNA_synt_N"/>
    <property type="match status" value="1"/>
</dbReference>
<dbReference type="SMART" id="SM00836">
    <property type="entry name" value="DALR_1"/>
    <property type="match status" value="1"/>
</dbReference>
<dbReference type="SUPFAM" id="SSF47323">
    <property type="entry name" value="Anticodon-binding domain of a subclass of class I aminoacyl-tRNA synthetases"/>
    <property type="match status" value="1"/>
</dbReference>
<dbReference type="SUPFAM" id="SSF55190">
    <property type="entry name" value="Arginyl-tRNA synthetase (ArgRS), N-terminal 'additional' domain"/>
    <property type="match status" value="1"/>
</dbReference>
<dbReference type="SUPFAM" id="SSF52374">
    <property type="entry name" value="Nucleotidylyl transferase"/>
    <property type="match status" value="1"/>
</dbReference>
<dbReference type="PROSITE" id="PS00178">
    <property type="entry name" value="AA_TRNA_LIGASE_I"/>
    <property type="match status" value="1"/>
</dbReference>
<protein>
    <recommendedName>
        <fullName evidence="1">Arginine--tRNA ligase</fullName>
        <ecNumber evidence="1">6.1.1.19</ecNumber>
    </recommendedName>
    <alternativeName>
        <fullName evidence="1">Arginyl-tRNA synthetase</fullName>
        <shortName evidence="1">ArgRS</shortName>
    </alternativeName>
</protein>
<comment type="catalytic activity">
    <reaction evidence="1">
        <text>tRNA(Arg) + L-arginine + ATP = L-arginyl-tRNA(Arg) + AMP + diphosphate</text>
        <dbReference type="Rhea" id="RHEA:20301"/>
        <dbReference type="Rhea" id="RHEA-COMP:9658"/>
        <dbReference type="Rhea" id="RHEA-COMP:9673"/>
        <dbReference type="ChEBI" id="CHEBI:30616"/>
        <dbReference type="ChEBI" id="CHEBI:32682"/>
        <dbReference type="ChEBI" id="CHEBI:33019"/>
        <dbReference type="ChEBI" id="CHEBI:78442"/>
        <dbReference type="ChEBI" id="CHEBI:78513"/>
        <dbReference type="ChEBI" id="CHEBI:456215"/>
        <dbReference type="EC" id="6.1.1.19"/>
    </reaction>
</comment>
<comment type="subunit">
    <text evidence="1">Monomer.</text>
</comment>
<comment type="subcellular location">
    <subcellularLocation>
        <location evidence="1">Cytoplasm</location>
    </subcellularLocation>
</comment>
<comment type="similarity">
    <text evidence="1">Belongs to the class-I aminoacyl-tRNA synthetase family.</text>
</comment>
<accession>A8Z117</accession>
<feature type="chain" id="PRO_1000076235" description="Arginine--tRNA ligase">
    <location>
        <begin position="1"/>
        <end position="553"/>
    </location>
</feature>
<feature type="short sequence motif" description="'HIGH' region">
    <location>
        <begin position="130"/>
        <end position="140"/>
    </location>
</feature>